<name>ROK1_EREGS</name>
<feature type="chain" id="PRO_0000227958" description="ATP-dependent RNA helicase ROK1">
    <location>
        <begin position="1"/>
        <end position="569"/>
    </location>
</feature>
<feature type="domain" description="Helicase ATP-binding" evidence="2">
    <location>
        <begin position="154"/>
        <end position="335"/>
    </location>
</feature>
<feature type="domain" description="Helicase C-terminal" evidence="3">
    <location>
        <begin position="346"/>
        <end position="508"/>
    </location>
</feature>
<feature type="region of interest" description="Disordered" evidence="4">
    <location>
        <begin position="15"/>
        <end position="106"/>
    </location>
</feature>
<feature type="region of interest" description="Disordered" evidence="4">
    <location>
        <begin position="536"/>
        <end position="569"/>
    </location>
</feature>
<feature type="short sequence motif" description="Q motif">
    <location>
        <begin position="123"/>
        <end position="151"/>
    </location>
</feature>
<feature type="short sequence motif" description="DEAD box">
    <location>
        <begin position="282"/>
        <end position="285"/>
    </location>
</feature>
<feature type="compositionally biased region" description="Basic and acidic residues" evidence="4">
    <location>
        <begin position="36"/>
        <end position="53"/>
    </location>
</feature>
<feature type="compositionally biased region" description="Basic and acidic residues" evidence="4">
    <location>
        <begin position="64"/>
        <end position="76"/>
    </location>
</feature>
<feature type="binding site" evidence="2">
    <location>
        <begin position="167"/>
        <end position="174"/>
    </location>
    <ligand>
        <name>ATP</name>
        <dbReference type="ChEBI" id="CHEBI:30616"/>
    </ligand>
</feature>
<comment type="function">
    <text>ATP-dependent RNA helicase involved in 40S ribosomal subunit biogenesis. Required for the processing and cleavage of 35S pre-rRNA at sites A0, A1, and A2, leading to mature 18S rRNA.</text>
</comment>
<comment type="catalytic activity">
    <reaction>
        <text>ATP + H2O = ADP + phosphate + H(+)</text>
        <dbReference type="Rhea" id="RHEA:13065"/>
        <dbReference type="ChEBI" id="CHEBI:15377"/>
        <dbReference type="ChEBI" id="CHEBI:15378"/>
        <dbReference type="ChEBI" id="CHEBI:30616"/>
        <dbReference type="ChEBI" id="CHEBI:43474"/>
        <dbReference type="ChEBI" id="CHEBI:456216"/>
        <dbReference type="EC" id="3.6.4.13"/>
    </reaction>
</comment>
<comment type="subunit">
    <text evidence="1">Interacts with the U3 snoRNA and is associated with the 90S and 40S pre-ribosomes.</text>
</comment>
<comment type="subcellular location">
    <subcellularLocation>
        <location evidence="1">Nucleus</location>
        <location evidence="1">Nucleolus</location>
    </subcellularLocation>
</comment>
<comment type="domain">
    <text>The Q motif is unique to and characteristic of the DEAD box family of RNA helicases and controls ATP binding and hydrolysis.</text>
</comment>
<comment type="similarity">
    <text evidence="5">Belongs to the DEAD box helicase family. DDX52/ROK1 subfamily.</text>
</comment>
<gene>
    <name type="primary">ROK1</name>
    <name type="ordered locus">ADL024C</name>
</gene>
<accession>Q75AE1</accession>
<keyword id="KW-0067">ATP-binding</keyword>
<keyword id="KW-0347">Helicase</keyword>
<keyword id="KW-0378">Hydrolase</keyword>
<keyword id="KW-0547">Nucleotide-binding</keyword>
<keyword id="KW-0539">Nucleus</keyword>
<keyword id="KW-1185">Reference proteome</keyword>
<keyword id="KW-0690">Ribosome biogenesis</keyword>
<keyword id="KW-0694">RNA-binding</keyword>
<keyword id="KW-0698">rRNA processing</keyword>
<evidence type="ECO:0000250" key="1"/>
<evidence type="ECO:0000255" key="2">
    <source>
        <dbReference type="PROSITE-ProRule" id="PRU00541"/>
    </source>
</evidence>
<evidence type="ECO:0000255" key="3">
    <source>
        <dbReference type="PROSITE-ProRule" id="PRU00542"/>
    </source>
</evidence>
<evidence type="ECO:0000256" key="4">
    <source>
        <dbReference type="SAM" id="MobiDB-lite"/>
    </source>
</evidence>
<evidence type="ECO:0000305" key="5"/>
<sequence>MDIFRVLTRGASVKKDGKQVDFSRVQSQRTARPGQRGKDEDEEQLSRELDFFRTRRSVPAAAERPAEETGDAHRDETEQDEGAEDVAPPPRITTAEEASQLRRSYRGKVTGADAPLPIGSFEDLVTRFKLDKRLLSNLIENNFTEPTPIQCEAIPISLQNRDIVACAPTGSGKTLAFLIPLLQQVISDKAVGTGVKGLIISPTKELANQIFDECSKLAQRIFLEKKRPLSVALLSKSLAAKLKNQIVSDKKYDIIISTPLRLIDIVKSESLDLSAVKYLIFDEADKLFDKTFVEQTDDILSACSHPNISKVLFSATLPSSVEELAQSIMTDPVRVIIGHKEAANTNIEQKLVFCGNEEGKLVAIRQLIQEGMFRPPVIIFLESITRAKALFHELLYDKLNVDVIHAERTQVQREKIIERFKSGDLWCLICTDVLARGIDFKGINLVINYDVPRSAQAYVHRIGRTGRGGRKGTAVTFFTKQDAIAVKPIVNVMKQSGCEVAAWMENIAKMTKREKEMIKKGKAFVDRKQISTVPKILKQKKRQQKEMIEASKKRKLAQQAGDASEEEHA</sequence>
<proteinExistence type="inferred from homology"/>
<protein>
    <recommendedName>
        <fullName>ATP-dependent RNA helicase ROK1</fullName>
        <ecNumber>3.6.4.13</ecNumber>
    </recommendedName>
</protein>
<reference key="1">
    <citation type="journal article" date="2004" name="Science">
        <title>The Ashbya gossypii genome as a tool for mapping the ancient Saccharomyces cerevisiae genome.</title>
        <authorList>
            <person name="Dietrich F.S."/>
            <person name="Voegeli S."/>
            <person name="Brachat S."/>
            <person name="Lerch A."/>
            <person name="Gates K."/>
            <person name="Steiner S."/>
            <person name="Mohr C."/>
            <person name="Poehlmann R."/>
            <person name="Luedi P."/>
            <person name="Choi S."/>
            <person name="Wing R.A."/>
            <person name="Flavier A."/>
            <person name="Gaffney T.D."/>
            <person name="Philippsen P."/>
        </authorList>
    </citation>
    <scope>NUCLEOTIDE SEQUENCE [LARGE SCALE GENOMIC DNA]</scope>
    <source>
        <strain>ATCC 10895 / CBS 109.51 / FGSC 9923 / NRRL Y-1056</strain>
    </source>
</reference>
<reference key="2">
    <citation type="journal article" date="2013" name="G3 (Bethesda)">
        <title>Genomes of Ashbya fungi isolated from insects reveal four mating-type loci, numerous translocations, lack of transposons, and distinct gene duplications.</title>
        <authorList>
            <person name="Dietrich F.S."/>
            <person name="Voegeli S."/>
            <person name="Kuo S."/>
            <person name="Philippsen P."/>
        </authorList>
    </citation>
    <scope>GENOME REANNOTATION</scope>
    <source>
        <strain>ATCC 10895 / CBS 109.51 / FGSC 9923 / NRRL Y-1056</strain>
    </source>
</reference>
<organism>
    <name type="scientific">Eremothecium gossypii (strain ATCC 10895 / CBS 109.51 / FGSC 9923 / NRRL Y-1056)</name>
    <name type="common">Yeast</name>
    <name type="synonym">Ashbya gossypii</name>
    <dbReference type="NCBI Taxonomy" id="284811"/>
    <lineage>
        <taxon>Eukaryota</taxon>
        <taxon>Fungi</taxon>
        <taxon>Dikarya</taxon>
        <taxon>Ascomycota</taxon>
        <taxon>Saccharomycotina</taxon>
        <taxon>Saccharomycetes</taxon>
        <taxon>Saccharomycetales</taxon>
        <taxon>Saccharomycetaceae</taxon>
        <taxon>Eremothecium</taxon>
    </lineage>
</organism>
<dbReference type="EC" id="3.6.4.13"/>
<dbReference type="EMBL" id="AE016817">
    <property type="protein sequence ID" value="AAS51897.1"/>
    <property type="molecule type" value="Genomic_DNA"/>
</dbReference>
<dbReference type="RefSeq" id="NP_984073.1">
    <property type="nucleotide sequence ID" value="NM_209426.1"/>
</dbReference>
<dbReference type="SMR" id="Q75AE1"/>
<dbReference type="FunCoup" id="Q75AE1">
    <property type="interactions" value="1104"/>
</dbReference>
<dbReference type="STRING" id="284811.Q75AE1"/>
<dbReference type="EnsemblFungi" id="AAS51897">
    <property type="protein sequence ID" value="AAS51897"/>
    <property type="gene ID" value="AGOS_ADL024C"/>
</dbReference>
<dbReference type="GeneID" id="4620221"/>
<dbReference type="KEGG" id="ago:AGOS_ADL024C"/>
<dbReference type="eggNOG" id="KOG0344">
    <property type="taxonomic scope" value="Eukaryota"/>
</dbReference>
<dbReference type="HOGENOM" id="CLU_003041_1_4_1"/>
<dbReference type="InParanoid" id="Q75AE1"/>
<dbReference type="OMA" id="EMAHSIM"/>
<dbReference type="OrthoDB" id="360161at2759"/>
<dbReference type="Proteomes" id="UP000000591">
    <property type="component" value="Chromosome IV"/>
</dbReference>
<dbReference type="GO" id="GO:0005730">
    <property type="term" value="C:nucleolus"/>
    <property type="evidence" value="ECO:0007669"/>
    <property type="project" value="UniProtKB-SubCell"/>
</dbReference>
<dbReference type="GO" id="GO:0032040">
    <property type="term" value="C:small-subunit processome"/>
    <property type="evidence" value="ECO:0007669"/>
    <property type="project" value="EnsemblFungi"/>
</dbReference>
<dbReference type="GO" id="GO:0005524">
    <property type="term" value="F:ATP binding"/>
    <property type="evidence" value="ECO:0007669"/>
    <property type="project" value="UniProtKB-KW"/>
</dbReference>
<dbReference type="GO" id="GO:0016887">
    <property type="term" value="F:ATP hydrolysis activity"/>
    <property type="evidence" value="ECO:0007669"/>
    <property type="project" value="RHEA"/>
</dbReference>
<dbReference type="GO" id="GO:0003723">
    <property type="term" value="F:RNA binding"/>
    <property type="evidence" value="ECO:0007669"/>
    <property type="project" value="UniProtKB-KW"/>
</dbReference>
<dbReference type="GO" id="GO:0003724">
    <property type="term" value="F:RNA helicase activity"/>
    <property type="evidence" value="ECO:0007669"/>
    <property type="project" value="UniProtKB-EC"/>
</dbReference>
<dbReference type="GO" id="GO:0000480">
    <property type="term" value="P:endonucleolytic cleavage in 5'-ETS of tricistronic rRNA transcript (SSU-rRNA, 5.8S rRNA, LSU-rRNA)"/>
    <property type="evidence" value="ECO:0007669"/>
    <property type="project" value="EnsemblFungi"/>
</dbReference>
<dbReference type="GO" id="GO:0000447">
    <property type="term" value="P:endonucleolytic cleavage in ITS1 to separate SSU-rRNA from 5.8S rRNA and LSU-rRNA from tricistronic rRNA transcript (SSU-rRNA, 5.8S rRNA, LSU-rRNA)"/>
    <property type="evidence" value="ECO:0007669"/>
    <property type="project" value="EnsemblFungi"/>
</dbReference>
<dbReference type="GO" id="GO:0000472">
    <property type="term" value="P:endonucleolytic cleavage to generate mature 5'-end of SSU-rRNA from (SSU-rRNA, 5.8S rRNA, LSU-rRNA)"/>
    <property type="evidence" value="ECO:0007669"/>
    <property type="project" value="EnsemblFungi"/>
</dbReference>
<dbReference type="GO" id="GO:0030490">
    <property type="term" value="P:maturation of SSU-rRNA"/>
    <property type="evidence" value="ECO:0000318"/>
    <property type="project" value="GO_Central"/>
</dbReference>
<dbReference type="GO" id="GO:0048254">
    <property type="term" value="P:snoRNA localization"/>
    <property type="evidence" value="ECO:0007669"/>
    <property type="project" value="EnsemblFungi"/>
</dbReference>
<dbReference type="CDD" id="cd17957">
    <property type="entry name" value="DEADc_DDX52"/>
    <property type="match status" value="1"/>
</dbReference>
<dbReference type="CDD" id="cd18787">
    <property type="entry name" value="SF2_C_DEAD"/>
    <property type="match status" value="1"/>
</dbReference>
<dbReference type="FunFam" id="3.40.50.300:FF:000759">
    <property type="entry name" value="probable ATP-dependent RNA helicase DDX52"/>
    <property type="match status" value="1"/>
</dbReference>
<dbReference type="Gene3D" id="3.40.50.300">
    <property type="entry name" value="P-loop containing nucleotide triphosphate hydrolases"/>
    <property type="match status" value="2"/>
</dbReference>
<dbReference type="InterPro" id="IPR044764">
    <property type="entry name" value="DDX52/Rok1_DEADc"/>
</dbReference>
<dbReference type="InterPro" id="IPR011545">
    <property type="entry name" value="DEAD/DEAH_box_helicase_dom"/>
</dbReference>
<dbReference type="InterPro" id="IPR050079">
    <property type="entry name" value="DEAD_box_RNA_helicase"/>
</dbReference>
<dbReference type="InterPro" id="IPR014001">
    <property type="entry name" value="Helicase_ATP-bd"/>
</dbReference>
<dbReference type="InterPro" id="IPR001650">
    <property type="entry name" value="Helicase_C-like"/>
</dbReference>
<dbReference type="InterPro" id="IPR027417">
    <property type="entry name" value="P-loop_NTPase"/>
</dbReference>
<dbReference type="InterPro" id="IPR000629">
    <property type="entry name" value="RNA-helicase_DEAD-box_CS"/>
</dbReference>
<dbReference type="InterPro" id="IPR014014">
    <property type="entry name" value="RNA_helicase_DEAD_Q_motif"/>
</dbReference>
<dbReference type="PANTHER" id="PTHR47959">
    <property type="entry name" value="ATP-DEPENDENT RNA HELICASE RHLE-RELATED"/>
    <property type="match status" value="1"/>
</dbReference>
<dbReference type="PANTHER" id="PTHR47959:SF15">
    <property type="entry name" value="RNA HELICASE"/>
    <property type="match status" value="1"/>
</dbReference>
<dbReference type="Pfam" id="PF00270">
    <property type="entry name" value="DEAD"/>
    <property type="match status" value="1"/>
</dbReference>
<dbReference type="Pfam" id="PF00271">
    <property type="entry name" value="Helicase_C"/>
    <property type="match status" value="1"/>
</dbReference>
<dbReference type="SMART" id="SM00487">
    <property type="entry name" value="DEXDc"/>
    <property type="match status" value="1"/>
</dbReference>
<dbReference type="SMART" id="SM00490">
    <property type="entry name" value="HELICc"/>
    <property type="match status" value="1"/>
</dbReference>
<dbReference type="SUPFAM" id="SSF52540">
    <property type="entry name" value="P-loop containing nucleoside triphosphate hydrolases"/>
    <property type="match status" value="1"/>
</dbReference>
<dbReference type="PROSITE" id="PS00039">
    <property type="entry name" value="DEAD_ATP_HELICASE"/>
    <property type="match status" value="1"/>
</dbReference>
<dbReference type="PROSITE" id="PS51192">
    <property type="entry name" value="HELICASE_ATP_BIND_1"/>
    <property type="match status" value="1"/>
</dbReference>
<dbReference type="PROSITE" id="PS51194">
    <property type="entry name" value="HELICASE_CTER"/>
    <property type="match status" value="1"/>
</dbReference>
<dbReference type="PROSITE" id="PS51195">
    <property type="entry name" value="Q_MOTIF"/>
    <property type="match status" value="1"/>
</dbReference>